<proteinExistence type="evidence at protein level"/>
<accession>Q7XIT1</accession>
<accession>Q9FS17</accession>
<evidence type="ECO:0000250" key="1"/>
<evidence type="ECO:0000250" key="2">
    <source>
        <dbReference type="UniProtKB" id="Q9C5S2"/>
    </source>
</evidence>
<evidence type="ECO:0000255" key="3"/>
<evidence type="ECO:0000255" key="4">
    <source>
        <dbReference type="PROSITE-ProRule" id="PRU00159"/>
    </source>
</evidence>
<evidence type="ECO:0000255" key="5">
    <source>
        <dbReference type="PROSITE-ProRule" id="PRU00498"/>
    </source>
</evidence>
<evidence type="ECO:0000255" key="6">
    <source>
        <dbReference type="PROSITE-ProRule" id="PRU00725"/>
    </source>
</evidence>
<evidence type="ECO:0000256" key="7">
    <source>
        <dbReference type="SAM" id="MobiDB-lite"/>
    </source>
</evidence>
<evidence type="ECO:0000269" key="8">
    <source>
    </source>
</evidence>
<evidence type="ECO:0000269" key="9">
    <source>
    </source>
</evidence>
<evidence type="ECO:0000269" key="10">
    <source>
    </source>
</evidence>
<evidence type="ECO:0000303" key="11">
    <source>
    </source>
</evidence>
<evidence type="ECO:0000305" key="12"/>
<evidence type="ECO:0000312" key="13">
    <source>
        <dbReference type="EMBL" id="BAC79579.1"/>
    </source>
</evidence>
<evidence type="ECO:0000312" key="14">
    <source>
        <dbReference type="EMBL" id="BAF21520.1"/>
    </source>
</evidence>
<evidence type="ECO:0000312" key="15">
    <source>
        <dbReference type="EMBL" id="EEE67138.1"/>
    </source>
</evidence>
<protein>
    <recommendedName>
        <fullName evidence="12">Serine/threonine-protein kinase/endoribonuclease IRE1</fullName>
    </recommendedName>
    <alternativeName>
        <fullName evidence="12">Endoplasmic reticulum-to-nucleus signaling 1</fullName>
    </alternativeName>
    <alternativeName>
        <fullName evidence="12">Inositol-requiring protein 1</fullName>
        <shortName evidence="11">OsIRE1</shortName>
    </alternativeName>
    <domain>
        <recommendedName>
            <fullName>Serine/threonine-protein kinase</fullName>
            <ecNumber>2.7.11.1</ecNumber>
        </recommendedName>
    </domain>
    <domain>
        <recommendedName>
            <fullName>Endoribonuclease</fullName>
            <ecNumber>3.1.26.-</ecNumber>
        </recommendedName>
    </domain>
</protein>
<feature type="signal peptide" evidence="3">
    <location>
        <begin position="1"/>
        <end position="19"/>
    </location>
</feature>
<feature type="chain" id="PRO_5008177494" description="Serine/threonine-protein kinase/endoribonuclease IRE1" evidence="3">
    <location>
        <begin position="20"/>
        <end position="893"/>
    </location>
</feature>
<feature type="topological domain" description="Lumenal" evidence="12">
    <location>
        <begin position="20"/>
        <end position="379"/>
    </location>
</feature>
<feature type="transmembrane region" description="Helical" evidence="3">
    <location>
        <begin position="380"/>
        <end position="397"/>
    </location>
</feature>
<feature type="topological domain" description="Cytoplasmic" evidence="12">
    <location>
        <begin position="398"/>
        <end position="893"/>
    </location>
</feature>
<feature type="domain" description="Protein kinase" evidence="4">
    <location>
        <begin position="491"/>
        <end position="759"/>
    </location>
</feature>
<feature type="domain" description="KEN" evidence="6">
    <location>
        <begin position="762"/>
        <end position="890"/>
    </location>
</feature>
<feature type="region of interest" description="Disordered" evidence="7">
    <location>
        <begin position="451"/>
        <end position="478"/>
    </location>
</feature>
<feature type="active site" description="Proton acceptor" evidence="4">
    <location>
        <position position="625"/>
    </location>
</feature>
<feature type="binding site" evidence="4">
    <location>
        <begin position="497"/>
        <end position="505"/>
    </location>
    <ligand>
        <name>ATP</name>
        <dbReference type="ChEBI" id="CHEBI:30616"/>
    </ligand>
</feature>
<feature type="binding site" evidence="4">
    <location>
        <position position="519"/>
    </location>
    <ligand>
        <name>ATP</name>
        <dbReference type="ChEBI" id="CHEBI:30616"/>
    </ligand>
</feature>
<feature type="glycosylation site" description="N-linked (GlcNAc...) asparagine" evidence="5">
    <location>
        <position position="105"/>
    </location>
</feature>
<feature type="glycosylation site" description="N-linked (GlcNAc...) asparagine" evidence="5">
    <location>
        <position position="158"/>
    </location>
</feature>
<feature type="glycosylation site" description="N-linked (GlcNAc...) asparagine" evidence="5">
    <location>
        <position position="259"/>
    </location>
</feature>
<feature type="glycosylation site" description="N-linked (GlcNAc...) asparagine" evidence="5">
    <location>
        <position position="351"/>
    </location>
</feature>
<feature type="mutagenesis site" description="Loss of autophosphorylation." evidence="9">
    <original>K</original>
    <variation>A</variation>
    <location>
        <position position="519"/>
    </location>
</feature>
<comment type="function">
    <text evidence="9 10">Involved in endoplasmic reticulum (ER) stress response. Senses unfolded proteins in the lumen of the ER via its N-terminal domain which leads to enzyme auto-activation. The active endoribonuclease domain splices bZIP50 mRNA to generate a new C-terminus, converting it into a potent unfolded-protein response (UPR) transcriptional activator, which then induces transcription of UPR target genes, such as luminal-binding protein (BiP) chaperones.</text>
</comment>
<comment type="catalytic activity">
    <reaction evidence="12">
        <text>L-seryl-[protein] + ATP = O-phospho-L-seryl-[protein] + ADP + H(+)</text>
        <dbReference type="Rhea" id="RHEA:17989"/>
        <dbReference type="Rhea" id="RHEA-COMP:9863"/>
        <dbReference type="Rhea" id="RHEA-COMP:11604"/>
        <dbReference type="ChEBI" id="CHEBI:15378"/>
        <dbReference type="ChEBI" id="CHEBI:29999"/>
        <dbReference type="ChEBI" id="CHEBI:30616"/>
        <dbReference type="ChEBI" id="CHEBI:83421"/>
        <dbReference type="ChEBI" id="CHEBI:456216"/>
        <dbReference type="EC" id="2.7.11.1"/>
    </reaction>
</comment>
<comment type="catalytic activity">
    <reaction evidence="12">
        <text>L-threonyl-[protein] + ATP = O-phospho-L-threonyl-[protein] + ADP + H(+)</text>
        <dbReference type="Rhea" id="RHEA:46608"/>
        <dbReference type="Rhea" id="RHEA-COMP:11060"/>
        <dbReference type="Rhea" id="RHEA-COMP:11605"/>
        <dbReference type="ChEBI" id="CHEBI:15378"/>
        <dbReference type="ChEBI" id="CHEBI:30013"/>
        <dbReference type="ChEBI" id="CHEBI:30616"/>
        <dbReference type="ChEBI" id="CHEBI:61977"/>
        <dbReference type="ChEBI" id="CHEBI:456216"/>
        <dbReference type="EC" id="2.7.11.1"/>
    </reaction>
</comment>
<comment type="subunit">
    <text evidence="1">Homodimer; disulfide-linked. Dimer formation is driven by hydrophobic interactions within the N-terminal luminal domains and stabilized by disulfide bridges (By similarity).</text>
</comment>
<comment type="subcellular location">
    <subcellularLocation>
        <location evidence="2">Endoplasmic reticulum membrane</location>
        <topology evidence="3">Single-pass type I membrane protein</topology>
    </subcellularLocation>
</comment>
<comment type="tissue specificity">
    <text evidence="8">Expressed in roots, nodes, internodes, leaf sheaths, leaf blades, young ears and mature ears.</text>
</comment>
<comment type="PTM">
    <text evidence="8">Autophosphorylated.</text>
</comment>
<comment type="similarity">
    <text evidence="4">Belongs to the protein kinase superfamily. Ser/Thr protein kinase family.</text>
</comment>
<reference key="1">
    <citation type="journal article" date="2002" name="Plant Cell Physiol.">
        <title>Isolation and characterization of a putative transducer of endoplasmic reticulum stress in Oryza sativa.</title>
        <authorList>
            <person name="Okushima Y."/>
            <person name="Koizumi N."/>
            <person name="Yamaguchi Y."/>
            <person name="Kimata Y."/>
            <person name="Kohno K."/>
            <person name="Sano H."/>
        </authorList>
    </citation>
    <scope>NUCLEOTIDE SEQUENCE [MRNA]</scope>
    <scope>FUNCTION</scope>
    <scope>SUBCELLULAR LOCATION</scope>
    <scope>AUTOPHOSPHORYLATION</scope>
    <scope>MUTAGENESIS OF LYS-519</scope>
</reference>
<reference key="2">
    <citation type="journal article" date="2005" name="Nature">
        <title>The map-based sequence of the rice genome.</title>
        <authorList>
            <consortium name="International rice genome sequencing project (IRGSP)"/>
        </authorList>
    </citation>
    <scope>NUCLEOTIDE SEQUENCE [LARGE SCALE GENOMIC DNA]</scope>
    <source>
        <strain>cv. Nipponbare</strain>
    </source>
</reference>
<reference key="3">
    <citation type="journal article" date="2008" name="Nucleic Acids Res.">
        <title>The rice annotation project database (RAP-DB): 2008 update.</title>
        <authorList>
            <consortium name="The rice annotation project (RAP)"/>
        </authorList>
    </citation>
    <scope>GENOME REANNOTATION</scope>
    <source>
        <strain>cv. Nipponbare</strain>
    </source>
</reference>
<reference key="4">
    <citation type="journal article" date="2013" name="Rice">
        <title>Improvement of the Oryza sativa Nipponbare reference genome using next generation sequence and optical map data.</title>
        <authorList>
            <person name="Kawahara Y."/>
            <person name="de la Bastide M."/>
            <person name="Hamilton J.P."/>
            <person name="Kanamori H."/>
            <person name="McCombie W.R."/>
            <person name="Ouyang S."/>
            <person name="Schwartz D.C."/>
            <person name="Tanaka T."/>
            <person name="Wu J."/>
            <person name="Zhou S."/>
            <person name="Childs K.L."/>
            <person name="Davidson R.M."/>
            <person name="Lin H."/>
            <person name="Quesada-Ocampo L."/>
            <person name="Vaillancourt B."/>
            <person name="Sakai H."/>
            <person name="Lee S.S."/>
            <person name="Kim J."/>
            <person name="Numa H."/>
            <person name="Itoh T."/>
            <person name="Buell C.R."/>
            <person name="Matsumoto T."/>
        </authorList>
    </citation>
    <scope>GENOME REANNOTATION</scope>
    <source>
        <strain>cv. Nipponbare</strain>
    </source>
</reference>
<reference key="5">
    <citation type="journal article" date="2005" name="PLoS Biol.">
        <title>The genomes of Oryza sativa: a history of duplications.</title>
        <authorList>
            <person name="Yu J."/>
            <person name="Wang J."/>
            <person name="Lin W."/>
            <person name="Li S."/>
            <person name="Li H."/>
            <person name="Zhou J."/>
            <person name="Ni P."/>
            <person name="Dong W."/>
            <person name="Hu S."/>
            <person name="Zeng C."/>
            <person name="Zhang J."/>
            <person name="Zhang Y."/>
            <person name="Li R."/>
            <person name="Xu Z."/>
            <person name="Li S."/>
            <person name="Li X."/>
            <person name="Zheng H."/>
            <person name="Cong L."/>
            <person name="Lin L."/>
            <person name="Yin J."/>
            <person name="Geng J."/>
            <person name="Li G."/>
            <person name="Shi J."/>
            <person name="Liu J."/>
            <person name="Lv H."/>
            <person name="Li J."/>
            <person name="Wang J."/>
            <person name="Deng Y."/>
            <person name="Ran L."/>
            <person name="Shi X."/>
            <person name="Wang X."/>
            <person name="Wu Q."/>
            <person name="Li C."/>
            <person name="Ren X."/>
            <person name="Wang J."/>
            <person name="Wang X."/>
            <person name="Li D."/>
            <person name="Liu D."/>
            <person name="Zhang X."/>
            <person name="Ji Z."/>
            <person name="Zhao W."/>
            <person name="Sun Y."/>
            <person name="Zhang Z."/>
            <person name="Bao J."/>
            <person name="Han Y."/>
            <person name="Dong L."/>
            <person name="Ji J."/>
            <person name="Chen P."/>
            <person name="Wu S."/>
            <person name="Liu J."/>
            <person name="Xiao Y."/>
            <person name="Bu D."/>
            <person name="Tan J."/>
            <person name="Yang L."/>
            <person name="Ye C."/>
            <person name="Zhang J."/>
            <person name="Xu J."/>
            <person name="Zhou Y."/>
            <person name="Yu Y."/>
            <person name="Zhang B."/>
            <person name="Zhuang S."/>
            <person name="Wei H."/>
            <person name="Liu B."/>
            <person name="Lei M."/>
            <person name="Yu H."/>
            <person name="Li Y."/>
            <person name="Xu H."/>
            <person name="Wei S."/>
            <person name="He X."/>
            <person name="Fang L."/>
            <person name="Zhang Z."/>
            <person name="Zhang Y."/>
            <person name="Huang X."/>
            <person name="Su Z."/>
            <person name="Tong W."/>
            <person name="Li J."/>
            <person name="Tong Z."/>
            <person name="Li S."/>
            <person name="Ye J."/>
            <person name="Wang L."/>
            <person name="Fang L."/>
            <person name="Lei T."/>
            <person name="Chen C.-S."/>
            <person name="Chen H.-C."/>
            <person name="Xu Z."/>
            <person name="Li H."/>
            <person name="Huang H."/>
            <person name="Zhang F."/>
            <person name="Xu H."/>
            <person name="Li N."/>
            <person name="Zhao C."/>
            <person name="Li S."/>
            <person name="Dong L."/>
            <person name="Huang Y."/>
            <person name="Li L."/>
            <person name="Xi Y."/>
            <person name="Qi Q."/>
            <person name="Li W."/>
            <person name="Zhang B."/>
            <person name="Hu W."/>
            <person name="Zhang Y."/>
            <person name="Tian X."/>
            <person name="Jiao Y."/>
            <person name="Liang X."/>
            <person name="Jin J."/>
            <person name="Gao L."/>
            <person name="Zheng W."/>
            <person name="Hao B."/>
            <person name="Liu S.-M."/>
            <person name="Wang W."/>
            <person name="Yuan L."/>
            <person name="Cao M."/>
            <person name="McDermott J."/>
            <person name="Samudrala R."/>
            <person name="Wang J."/>
            <person name="Wong G.K.-S."/>
            <person name="Yang H."/>
        </authorList>
    </citation>
    <scope>NUCLEOTIDE SEQUENCE [LARGE SCALE GENOMIC DNA]</scope>
    <source>
        <strain>cv. Nipponbare</strain>
    </source>
</reference>
<reference key="6">
    <citation type="journal article" date="2003" name="Science">
        <title>Collection, mapping, and annotation of over 28,000 cDNA clones from japonica rice.</title>
        <authorList>
            <consortium name="The rice full-length cDNA consortium"/>
        </authorList>
    </citation>
    <scope>NUCLEOTIDE SEQUENCE [LARGE SCALE MRNA]</scope>
    <source>
        <strain>cv. Nipponbare</strain>
    </source>
</reference>
<reference key="7">
    <citation type="journal article" date="2012" name="Mol. Plant">
        <title>Conservation of IRE1-regulated bZIP74 mRNA unconventional splicing in rice (Oryza sativa L.) involved in ER stress responses.</title>
        <authorList>
            <person name="Lu S.J."/>
            <person name="Yang Z.T."/>
            <person name="Sun L."/>
            <person name="Sun L."/>
            <person name="Song Z.T."/>
            <person name="Liu J.X."/>
        </authorList>
    </citation>
    <scope>FUNCTION</scope>
</reference>
<reference key="8">
    <citation type="journal article" date="2012" name="Plant J.">
        <title>Signal transduction by IRE1-mediated splicing of bZIP50 and other stress sensors in the endoplasmic reticulum stress response of rice.</title>
        <authorList>
            <person name="Hayashi S."/>
            <person name="Wakasa Y."/>
            <person name="Takahashi H."/>
            <person name="Kawakatsu T."/>
            <person name="Takaiwa F."/>
        </authorList>
    </citation>
    <scope>FUNCTION</scope>
</reference>
<dbReference type="EC" id="2.7.11.1"/>
<dbReference type="EC" id="3.1.26.-"/>
<dbReference type="EMBL" id="AB031396">
    <property type="protein sequence ID" value="BAB20385.1"/>
    <property type="molecule type" value="mRNA"/>
</dbReference>
<dbReference type="EMBL" id="AP003806">
    <property type="protein sequence ID" value="BAC79579.1"/>
    <property type="molecule type" value="Genomic_DNA"/>
</dbReference>
<dbReference type="EMBL" id="AP008213">
    <property type="protein sequence ID" value="BAF21520.1"/>
    <property type="molecule type" value="Genomic_DNA"/>
</dbReference>
<dbReference type="EMBL" id="AP014963">
    <property type="protein sequence ID" value="BAT01421.1"/>
    <property type="molecule type" value="Genomic_DNA"/>
</dbReference>
<dbReference type="EMBL" id="CM000144">
    <property type="protein sequence ID" value="EEE67138.1"/>
    <property type="molecule type" value="Genomic_DNA"/>
</dbReference>
<dbReference type="EMBL" id="AK068617">
    <property type="protein sequence ID" value="BAG90994.1"/>
    <property type="molecule type" value="mRNA"/>
</dbReference>
<dbReference type="RefSeq" id="XP_015647364.1">
    <property type="nucleotide sequence ID" value="XM_015791878.1"/>
</dbReference>
<dbReference type="SMR" id="Q7XIT1"/>
<dbReference type="FunCoup" id="Q7XIT1">
    <property type="interactions" value="1810"/>
</dbReference>
<dbReference type="STRING" id="39947.Q7XIT1"/>
<dbReference type="GlyCosmos" id="Q7XIT1">
    <property type="glycosylation" value="4 sites, No reported glycans"/>
</dbReference>
<dbReference type="PaxDb" id="39947-Q7XIT1"/>
<dbReference type="EnsemblPlants" id="Os07t0471000-01">
    <property type="protein sequence ID" value="Os07t0471000-01"/>
    <property type="gene ID" value="Os07g0471000"/>
</dbReference>
<dbReference type="Gramene" id="Os07t0471000-01">
    <property type="protein sequence ID" value="Os07t0471000-01"/>
    <property type="gene ID" value="Os07g0471000"/>
</dbReference>
<dbReference type="KEGG" id="dosa:Os07g0471000"/>
<dbReference type="eggNOG" id="KOG1027">
    <property type="taxonomic scope" value="Eukaryota"/>
</dbReference>
<dbReference type="HOGENOM" id="CLU_004875_3_1_1"/>
<dbReference type="InParanoid" id="Q7XIT1"/>
<dbReference type="OMA" id="MRPTAVY"/>
<dbReference type="OrthoDB" id="63989at2759"/>
<dbReference type="Proteomes" id="UP000000763">
    <property type="component" value="Chromosome 7"/>
</dbReference>
<dbReference type="Proteomes" id="UP000007752">
    <property type="component" value="Chromosome 7"/>
</dbReference>
<dbReference type="Proteomes" id="UP000059680">
    <property type="component" value="Chromosome 7"/>
</dbReference>
<dbReference type="GO" id="GO:0005789">
    <property type="term" value="C:endoplasmic reticulum membrane"/>
    <property type="evidence" value="ECO:0000314"/>
    <property type="project" value="UniProtKB"/>
</dbReference>
<dbReference type="GO" id="GO:1990604">
    <property type="term" value="C:IRE1-TRAF2-ASK1 complex"/>
    <property type="evidence" value="ECO:0000318"/>
    <property type="project" value="GO_Central"/>
</dbReference>
<dbReference type="GO" id="GO:0005524">
    <property type="term" value="F:ATP binding"/>
    <property type="evidence" value="ECO:0007669"/>
    <property type="project" value="UniProtKB-KW"/>
</dbReference>
<dbReference type="GO" id="GO:0106310">
    <property type="term" value="F:protein serine kinase activity"/>
    <property type="evidence" value="ECO:0007669"/>
    <property type="project" value="RHEA"/>
</dbReference>
<dbReference type="GO" id="GO:0004674">
    <property type="term" value="F:protein serine/threonine kinase activity"/>
    <property type="evidence" value="ECO:0000318"/>
    <property type="project" value="GO_Central"/>
</dbReference>
<dbReference type="GO" id="GO:0004521">
    <property type="term" value="F:RNA endonuclease activity"/>
    <property type="evidence" value="ECO:0000318"/>
    <property type="project" value="GO_Central"/>
</dbReference>
<dbReference type="GO" id="GO:0051082">
    <property type="term" value="F:unfolded protein binding"/>
    <property type="evidence" value="ECO:0000318"/>
    <property type="project" value="GO_Central"/>
</dbReference>
<dbReference type="GO" id="GO:0036498">
    <property type="term" value="P:IRE1-mediated unfolded protein response"/>
    <property type="evidence" value="ECO:0000318"/>
    <property type="project" value="GO_Central"/>
</dbReference>
<dbReference type="GO" id="GO:0006397">
    <property type="term" value="P:mRNA processing"/>
    <property type="evidence" value="ECO:0007669"/>
    <property type="project" value="UniProtKB-KW"/>
</dbReference>
<dbReference type="GO" id="GO:0034976">
    <property type="term" value="P:response to endoplasmic reticulum stress"/>
    <property type="evidence" value="ECO:0000315"/>
    <property type="project" value="UniProtKB"/>
</dbReference>
<dbReference type="GO" id="GO:0006986">
    <property type="term" value="P:response to unfolded protein"/>
    <property type="evidence" value="ECO:0000315"/>
    <property type="project" value="UniProtKB"/>
</dbReference>
<dbReference type="GO" id="GO:0008380">
    <property type="term" value="P:RNA splicing"/>
    <property type="evidence" value="ECO:0007669"/>
    <property type="project" value="UniProtKB-KW"/>
</dbReference>
<dbReference type="CDD" id="cd10422">
    <property type="entry name" value="RNase_Ire1"/>
    <property type="match status" value="1"/>
</dbReference>
<dbReference type="FunFam" id="3.30.200.20:FF:000077">
    <property type="entry name" value="Putative Serine/threonine-protein kinase/endoribonuclease IRE1"/>
    <property type="match status" value="1"/>
</dbReference>
<dbReference type="FunFam" id="1.20.1440.180:FF:000002">
    <property type="entry name" value="Serine/threonine-protein kinase/endoribonuclease IRE1"/>
    <property type="match status" value="1"/>
</dbReference>
<dbReference type="FunFam" id="1.10.510.10:FF:000463">
    <property type="entry name" value="Serine/threonine-protein kinase/endoribonuclease IRE1a"/>
    <property type="match status" value="1"/>
</dbReference>
<dbReference type="Gene3D" id="1.20.1440.180">
    <property type="entry name" value="KEN domain"/>
    <property type="match status" value="1"/>
</dbReference>
<dbReference type="Gene3D" id="3.30.200.20">
    <property type="entry name" value="Phosphorylase Kinase, domain 1"/>
    <property type="match status" value="1"/>
</dbReference>
<dbReference type="Gene3D" id="1.10.510.10">
    <property type="entry name" value="Transferase(Phosphotransferase) domain 1"/>
    <property type="match status" value="1"/>
</dbReference>
<dbReference type="InterPro" id="IPR045133">
    <property type="entry name" value="IRE1/2-like"/>
</dbReference>
<dbReference type="InterPro" id="IPR010513">
    <property type="entry name" value="KEN_dom"/>
</dbReference>
<dbReference type="InterPro" id="IPR038357">
    <property type="entry name" value="KEN_sf"/>
</dbReference>
<dbReference type="InterPro" id="IPR011009">
    <property type="entry name" value="Kinase-like_dom_sf"/>
</dbReference>
<dbReference type="InterPro" id="IPR000719">
    <property type="entry name" value="Prot_kinase_dom"/>
</dbReference>
<dbReference type="InterPro" id="IPR008271">
    <property type="entry name" value="Ser/Thr_kinase_AS"/>
</dbReference>
<dbReference type="PANTHER" id="PTHR13954">
    <property type="entry name" value="IRE1-RELATED"/>
    <property type="match status" value="1"/>
</dbReference>
<dbReference type="PANTHER" id="PTHR13954:SF6">
    <property type="entry name" value="NON-SPECIFIC SERINE_THREONINE PROTEIN KINASE"/>
    <property type="match status" value="1"/>
</dbReference>
<dbReference type="Pfam" id="PF00069">
    <property type="entry name" value="Pkinase"/>
    <property type="match status" value="1"/>
</dbReference>
<dbReference type="Pfam" id="PF06479">
    <property type="entry name" value="Ribonuc_2-5A"/>
    <property type="match status" value="1"/>
</dbReference>
<dbReference type="SMART" id="SM00580">
    <property type="entry name" value="PUG"/>
    <property type="match status" value="1"/>
</dbReference>
<dbReference type="SMART" id="SM00220">
    <property type="entry name" value="S_TKc"/>
    <property type="match status" value="1"/>
</dbReference>
<dbReference type="SUPFAM" id="SSF56112">
    <property type="entry name" value="Protein kinase-like (PK-like)"/>
    <property type="match status" value="1"/>
</dbReference>
<dbReference type="PROSITE" id="PS51392">
    <property type="entry name" value="KEN"/>
    <property type="match status" value="1"/>
</dbReference>
<dbReference type="PROSITE" id="PS50011">
    <property type="entry name" value="PROTEIN_KINASE_DOM"/>
    <property type="match status" value="1"/>
</dbReference>
<dbReference type="PROSITE" id="PS00108">
    <property type="entry name" value="PROTEIN_KINASE_ST"/>
    <property type="match status" value="1"/>
</dbReference>
<sequence length="893" mass="99088">MRSLRRVLLQLVLLAGVAFRGVRFDDAADAAAAAQGSSDLFELPSPSPTLALPGGGDEGASTEIIAAPWPGRHGLFTPPRSTSQPARAVVQPAADFGSQLQFYDNGTIQLVDLLSKLPRWQFSTGPPLSKHITTSKPDLNYVIYLDGSETSDLIEVHNGSGVRLPWKLEEFIAETPYIRDSFVTIGSKVSTTFVVNADSGEIIYKHSLPVALNEVGGPLVEEIPSKLDAARSGTSANIIVVVRTDYSISASDLGEHLFNWTRTSFTANYYARYGHQDMLAQSSCLRGNIPCIRTEGPPIKLYLPDSSSDNAIVLRPVNEVSAVDALEPLLPPKKLPQPAGESNVALDSAQNQTADIALGHFVPADTELTNSVTKFSYRWLFPTFLMLLIMACLVKLADASKYCRQFVIRFLKPFMRDEKLMDPRGKSEGTSKRRKARKKDGLINSTQIFSASDKEGNGTGGSTEAQSNKAHDSTNVELPNGLNGRQIGKLCVYSKEIGKGSNGTVVFEGSYGGREVAVKRLLRSHNDIASKEIENLIASDQDPNIVRMYGFEQDNDFVYISLERCRCSLADLIQLHSVPPFSNTKGTDIELWRQDGLPSAQLLKLMRDVVAGIVHLHSLGIIHRDLKPQNVLISKEGPLRAKLSDMGISKRLQEDMTSVSHHGTGFGSSGWQAPEQLRHGRQTRAIDLFSLGCLIFYCITKGKHPFGEYYERDMKIINNQFDLFIVDHIPEAVHLISQLLDPDPEKRPTAVYVMHHPFFWSPELCLSFLRDTSDRIEKTSETDLIDALEGINVEAFGKNWGEKLDAALLADMGRYRKYSFESTRDLLRLIRNKSGHYREFSDDLKELLGSLPEGFVQYFSSRFPKLLIKVYEVMSEHCKDEEAFSKYFLGSSA</sequence>
<gene>
    <name evidence="11" type="primary">IRE1</name>
    <name evidence="14" type="ordered locus">Os07g0471000</name>
    <name evidence="12" type="ordered locus">LOC_Os07g28820</name>
    <name evidence="13" type="ORF">OJ1103_E04.109</name>
    <name evidence="15" type="ORF">OsJ_24190</name>
</gene>
<keyword id="KW-0067">ATP-binding</keyword>
<keyword id="KW-1015">Disulfide bond</keyword>
<keyword id="KW-0256">Endoplasmic reticulum</keyword>
<keyword id="KW-0325">Glycoprotein</keyword>
<keyword id="KW-0378">Hydrolase</keyword>
<keyword id="KW-0418">Kinase</keyword>
<keyword id="KW-0472">Membrane</keyword>
<keyword id="KW-0507">mRNA processing</keyword>
<keyword id="KW-0508">mRNA splicing</keyword>
<keyword id="KW-0511">Multifunctional enzyme</keyword>
<keyword id="KW-0547">Nucleotide-binding</keyword>
<keyword id="KW-1185">Reference proteome</keyword>
<keyword id="KW-0723">Serine/threonine-protein kinase</keyword>
<keyword id="KW-0732">Signal</keyword>
<keyword id="KW-0804">Transcription</keyword>
<keyword id="KW-0805">Transcription regulation</keyword>
<keyword id="KW-0808">Transferase</keyword>
<keyword id="KW-0812">Transmembrane</keyword>
<keyword id="KW-1133">Transmembrane helix</keyword>
<keyword id="KW-0834">Unfolded protein response</keyword>
<organism>
    <name type="scientific">Oryza sativa subsp. japonica</name>
    <name type="common">Rice</name>
    <dbReference type="NCBI Taxonomy" id="39947"/>
    <lineage>
        <taxon>Eukaryota</taxon>
        <taxon>Viridiplantae</taxon>
        <taxon>Streptophyta</taxon>
        <taxon>Embryophyta</taxon>
        <taxon>Tracheophyta</taxon>
        <taxon>Spermatophyta</taxon>
        <taxon>Magnoliopsida</taxon>
        <taxon>Liliopsida</taxon>
        <taxon>Poales</taxon>
        <taxon>Poaceae</taxon>
        <taxon>BOP clade</taxon>
        <taxon>Oryzoideae</taxon>
        <taxon>Oryzeae</taxon>
        <taxon>Oryzinae</taxon>
        <taxon>Oryza</taxon>
        <taxon>Oryza sativa</taxon>
    </lineage>
</organism>
<name>IRE1_ORYSJ</name>